<keyword id="KW-0143">Chaperone</keyword>
<keyword id="KW-0963">Cytoplasm</keyword>
<keyword id="KW-0996">Nickel insertion</keyword>
<gene>
    <name evidence="1" type="primary">ureD</name>
    <name type="ordered locus">RPC_3697</name>
</gene>
<name>URED_RHOPB</name>
<dbReference type="EMBL" id="CP000301">
    <property type="protein sequence ID" value="ABD89232.1"/>
    <property type="molecule type" value="Genomic_DNA"/>
</dbReference>
<dbReference type="SMR" id="Q210F4"/>
<dbReference type="STRING" id="316056.RPC_3697"/>
<dbReference type="KEGG" id="rpc:RPC_3697"/>
<dbReference type="eggNOG" id="COG0829">
    <property type="taxonomic scope" value="Bacteria"/>
</dbReference>
<dbReference type="HOGENOM" id="CLU_056339_2_0_5"/>
<dbReference type="OrthoDB" id="9798842at2"/>
<dbReference type="GO" id="GO:0005737">
    <property type="term" value="C:cytoplasm"/>
    <property type="evidence" value="ECO:0007669"/>
    <property type="project" value="UniProtKB-SubCell"/>
</dbReference>
<dbReference type="GO" id="GO:0016151">
    <property type="term" value="F:nickel cation binding"/>
    <property type="evidence" value="ECO:0007669"/>
    <property type="project" value="UniProtKB-UniRule"/>
</dbReference>
<dbReference type="HAMAP" id="MF_01384">
    <property type="entry name" value="UreD"/>
    <property type="match status" value="1"/>
</dbReference>
<dbReference type="InterPro" id="IPR002669">
    <property type="entry name" value="UreD"/>
</dbReference>
<dbReference type="PANTHER" id="PTHR33643">
    <property type="entry name" value="UREASE ACCESSORY PROTEIN D"/>
    <property type="match status" value="1"/>
</dbReference>
<dbReference type="PANTHER" id="PTHR33643:SF1">
    <property type="entry name" value="UREASE ACCESSORY PROTEIN D"/>
    <property type="match status" value="1"/>
</dbReference>
<dbReference type="Pfam" id="PF01774">
    <property type="entry name" value="UreD"/>
    <property type="match status" value="1"/>
</dbReference>
<proteinExistence type="inferred from homology"/>
<sequence>MTPLDTSAAAIFAANRAQGAVKFDVRLQDGMTRRGRVQESGSLRVRFPSPEAEGLSAVFINTAGGIAGGDRFDTDIAAGEGTRLTLTTAAAEKLYRAAGAPAQIRIALAAAANAHLAWLPQETILFDQARVARSIDIDLAETASLLLCEIVVFGRAAMGERMLSGEFVDRWRLRRGGRLVFAETVRLDGDIGATLAHRAVANGAAAIGTALIVPGDEALVQRIRDSAPSFSGEVGISAWNGFAMARFCAQDAARLRTDMMAVLGCASGTALPRLWLS</sequence>
<reference key="1">
    <citation type="submission" date="2006-03" db="EMBL/GenBank/DDBJ databases">
        <title>Complete sequence of Rhodopseudomonas palustris BisB18.</title>
        <authorList>
            <consortium name="US DOE Joint Genome Institute"/>
            <person name="Copeland A."/>
            <person name="Lucas S."/>
            <person name="Lapidus A."/>
            <person name="Barry K."/>
            <person name="Detter J.C."/>
            <person name="Glavina del Rio T."/>
            <person name="Hammon N."/>
            <person name="Israni S."/>
            <person name="Dalin E."/>
            <person name="Tice H."/>
            <person name="Pitluck S."/>
            <person name="Chain P."/>
            <person name="Malfatti S."/>
            <person name="Shin M."/>
            <person name="Vergez L."/>
            <person name="Schmutz J."/>
            <person name="Larimer F."/>
            <person name="Land M."/>
            <person name="Hauser L."/>
            <person name="Pelletier D.A."/>
            <person name="Kyrpides N."/>
            <person name="Anderson I."/>
            <person name="Oda Y."/>
            <person name="Harwood C.S."/>
            <person name="Richardson P."/>
        </authorList>
    </citation>
    <scope>NUCLEOTIDE SEQUENCE [LARGE SCALE GENOMIC DNA]</scope>
    <source>
        <strain>BisB18</strain>
    </source>
</reference>
<organism>
    <name type="scientific">Rhodopseudomonas palustris (strain BisB18)</name>
    <dbReference type="NCBI Taxonomy" id="316056"/>
    <lineage>
        <taxon>Bacteria</taxon>
        <taxon>Pseudomonadati</taxon>
        <taxon>Pseudomonadota</taxon>
        <taxon>Alphaproteobacteria</taxon>
        <taxon>Hyphomicrobiales</taxon>
        <taxon>Nitrobacteraceae</taxon>
        <taxon>Rhodopseudomonas</taxon>
    </lineage>
</organism>
<accession>Q210F4</accession>
<feature type="chain" id="PRO_0000340511" description="Urease accessory protein UreD">
    <location>
        <begin position="1"/>
        <end position="277"/>
    </location>
</feature>
<evidence type="ECO:0000255" key="1">
    <source>
        <dbReference type="HAMAP-Rule" id="MF_01384"/>
    </source>
</evidence>
<protein>
    <recommendedName>
        <fullName evidence="1">Urease accessory protein UreD</fullName>
    </recommendedName>
</protein>
<comment type="function">
    <text evidence="1">Required for maturation of urease via the functional incorporation of the urease nickel metallocenter.</text>
</comment>
<comment type="subunit">
    <text evidence="1">UreD, UreF and UreG form a complex that acts as a GTP-hydrolysis-dependent molecular chaperone, activating the urease apoprotein by helping to assemble the nickel containing metallocenter of UreC. The UreE protein probably delivers the nickel.</text>
</comment>
<comment type="subcellular location">
    <subcellularLocation>
        <location evidence="1">Cytoplasm</location>
    </subcellularLocation>
</comment>
<comment type="similarity">
    <text evidence="1">Belongs to the UreD family.</text>
</comment>